<name>MENG_STAS1</name>
<sequence length="233" mass="26626">MADNKAKKEQVHDVFQNISGKYDRLNNIISFEQHKTWRKRVMKEMNVKSGSKALDVCCGTADWTISLSKAVGHTGEVIGVDFSENMLEVGKRKTKDMHNIQLVHGDAMNLPFEDNEFDYVTIGFGLRNVPDYLATLKELNRVLKPGGMIVCLETSQPTTPVFKQCYKLYFKFVMPIFGKIFAKSKDEYEWLQQSTFNFPDKEKLKRLFNQAGFSNVKVRSFTGGVAAMHLGYK</sequence>
<proteinExistence type="inferred from homology"/>
<gene>
    <name evidence="1" type="primary">menG</name>
    <name type="ordered locus">SSP1275</name>
</gene>
<dbReference type="EC" id="2.1.1.163" evidence="1"/>
<dbReference type="EMBL" id="AP008934">
    <property type="protein sequence ID" value="BAE18420.1"/>
    <property type="molecule type" value="Genomic_DNA"/>
</dbReference>
<dbReference type="RefSeq" id="WP_011303067.1">
    <property type="nucleotide sequence ID" value="NC_007350.1"/>
</dbReference>
<dbReference type="SMR" id="Q49XS5"/>
<dbReference type="GeneID" id="3616905"/>
<dbReference type="KEGG" id="ssp:SSP1275"/>
<dbReference type="PATRIC" id="fig|342451.11.peg.1277"/>
<dbReference type="eggNOG" id="COG2226">
    <property type="taxonomic scope" value="Bacteria"/>
</dbReference>
<dbReference type="HOGENOM" id="CLU_037990_0_0_9"/>
<dbReference type="OrthoDB" id="9808140at2"/>
<dbReference type="UniPathway" id="UPA00079">
    <property type="reaction ID" value="UER00169"/>
</dbReference>
<dbReference type="Proteomes" id="UP000006371">
    <property type="component" value="Chromosome"/>
</dbReference>
<dbReference type="GO" id="GO:0043770">
    <property type="term" value="F:demethylmenaquinone methyltransferase activity"/>
    <property type="evidence" value="ECO:0007669"/>
    <property type="project" value="UniProtKB-UniRule"/>
</dbReference>
<dbReference type="GO" id="GO:0009234">
    <property type="term" value="P:menaquinone biosynthetic process"/>
    <property type="evidence" value="ECO:0007669"/>
    <property type="project" value="UniProtKB-UniRule"/>
</dbReference>
<dbReference type="GO" id="GO:0032259">
    <property type="term" value="P:methylation"/>
    <property type="evidence" value="ECO:0007669"/>
    <property type="project" value="UniProtKB-KW"/>
</dbReference>
<dbReference type="CDD" id="cd02440">
    <property type="entry name" value="AdoMet_MTases"/>
    <property type="match status" value="1"/>
</dbReference>
<dbReference type="FunFam" id="3.40.50.150:FF:000086">
    <property type="entry name" value="Demethylmenaquinone methyltransferase"/>
    <property type="match status" value="1"/>
</dbReference>
<dbReference type="Gene3D" id="3.40.50.150">
    <property type="entry name" value="Vaccinia Virus protein VP39"/>
    <property type="match status" value="1"/>
</dbReference>
<dbReference type="HAMAP" id="MF_01813">
    <property type="entry name" value="MenG_UbiE_methyltr"/>
    <property type="match status" value="1"/>
</dbReference>
<dbReference type="InterPro" id="IPR029063">
    <property type="entry name" value="SAM-dependent_MTases_sf"/>
</dbReference>
<dbReference type="InterPro" id="IPR004033">
    <property type="entry name" value="UbiE/COQ5_MeTrFase"/>
</dbReference>
<dbReference type="InterPro" id="IPR023576">
    <property type="entry name" value="UbiE/COQ5_MeTrFase_CS"/>
</dbReference>
<dbReference type="NCBIfam" id="TIGR01934">
    <property type="entry name" value="MenG_MenH_UbiE"/>
    <property type="match status" value="1"/>
</dbReference>
<dbReference type="NCBIfam" id="NF001243">
    <property type="entry name" value="PRK00216.1-4"/>
    <property type="match status" value="1"/>
</dbReference>
<dbReference type="NCBIfam" id="NF001244">
    <property type="entry name" value="PRK00216.1-5"/>
    <property type="match status" value="1"/>
</dbReference>
<dbReference type="PANTHER" id="PTHR43591:SF24">
    <property type="entry name" value="2-METHOXY-6-POLYPRENYL-1,4-BENZOQUINOL METHYLASE, MITOCHONDRIAL"/>
    <property type="match status" value="1"/>
</dbReference>
<dbReference type="PANTHER" id="PTHR43591">
    <property type="entry name" value="METHYLTRANSFERASE"/>
    <property type="match status" value="1"/>
</dbReference>
<dbReference type="Pfam" id="PF01209">
    <property type="entry name" value="Ubie_methyltran"/>
    <property type="match status" value="1"/>
</dbReference>
<dbReference type="SUPFAM" id="SSF53335">
    <property type="entry name" value="S-adenosyl-L-methionine-dependent methyltransferases"/>
    <property type="match status" value="1"/>
</dbReference>
<dbReference type="PROSITE" id="PS51608">
    <property type="entry name" value="SAM_MT_UBIE"/>
    <property type="match status" value="1"/>
</dbReference>
<dbReference type="PROSITE" id="PS01183">
    <property type="entry name" value="UBIE_1"/>
    <property type="match status" value="1"/>
</dbReference>
<dbReference type="PROSITE" id="PS01184">
    <property type="entry name" value="UBIE_2"/>
    <property type="match status" value="1"/>
</dbReference>
<keyword id="KW-0474">Menaquinone biosynthesis</keyword>
<keyword id="KW-0489">Methyltransferase</keyword>
<keyword id="KW-1185">Reference proteome</keyword>
<keyword id="KW-0949">S-adenosyl-L-methionine</keyword>
<keyword id="KW-0808">Transferase</keyword>
<comment type="function">
    <text evidence="1">Methyltransferase required for the conversion of demethylmenaquinol (DMKH2) to menaquinol (MKH2).</text>
</comment>
<comment type="catalytic activity">
    <reaction evidence="1">
        <text>a 2-demethylmenaquinol + S-adenosyl-L-methionine = a menaquinol + S-adenosyl-L-homocysteine + H(+)</text>
        <dbReference type="Rhea" id="RHEA:42640"/>
        <dbReference type="Rhea" id="RHEA-COMP:9539"/>
        <dbReference type="Rhea" id="RHEA-COMP:9563"/>
        <dbReference type="ChEBI" id="CHEBI:15378"/>
        <dbReference type="ChEBI" id="CHEBI:18151"/>
        <dbReference type="ChEBI" id="CHEBI:55437"/>
        <dbReference type="ChEBI" id="CHEBI:57856"/>
        <dbReference type="ChEBI" id="CHEBI:59789"/>
        <dbReference type="EC" id="2.1.1.163"/>
    </reaction>
</comment>
<comment type="pathway">
    <text evidence="1">Quinol/quinone metabolism; menaquinone biosynthesis; menaquinol from 1,4-dihydroxy-2-naphthoate: step 2/2.</text>
</comment>
<comment type="similarity">
    <text evidence="1">Belongs to the class I-like SAM-binding methyltransferase superfamily. MenG/UbiE family.</text>
</comment>
<feature type="chain" id="PRO_0000193336" description="Demethylmenaquinone methyltransferase">
    <location>
        <begin position="1"/>
        <end position="233"/>
    </location>
</feature>
<feature type="binding site" evidence="1">
    <location>
        <position position="60"/>
    </location>
    <ligand>
        <name>S-adenosyl-L-methionine</name>
        <dbReference type="ChEBI" id="CHEBI:59789"/>
    </ligand>
</feature>
<feature type="binding site" evidence="1">
    <location>
        <position position="81"/>
    </location>
    <ligand>
        <name>S-adenosyl-L-methionine</name>
        <dbReference type="ChEBI" id="CHEBI:59789"/>
    </ligand>
</feature>
<feature type="binding site" evidence="1">
    <location>
        <begin position="106"/>
        <end position="107"/>
    </location>
    <ligand>
        <name>S-adenosyl-L-methionine</name>
        <dbReference type="ChEBI" id="CHEBI:59789"/>
    </ligand>
</feature>
<reference key="1">
    <citation type="journal article" date="2005" name="Proc. Natl. Acad. Sci. U.S.A.">
        <title>Whole genome sequence of Staphylococcus saprophyticus reveals the pathogenesis of uncomplicated urinary tract infection.</title>
        <authorList>
            <person name="Kuroda M."/>
            <person name="Yamashita A."/>
            <person name="Hirakawa H."/>
            <person name="Kumano M."/>
            <person name="Morikawa K."/>
            <person name="Higashide M."/>
            <person name="Maruyama A."/>
            <person name="Inose Y."/>
            <person name="Matoba K."/>
            <person name="Toh H."/>
            <person name="Kuhara S."/>
            <person name="Hattori M."/>
            <person name="Ohta T."/>
        </authorList>
    </citation>
    <scope>NUCLEOTIDE SEQUENCE [LARGE SCALE GENOMIC DNA]</scope>
    <source>
        <strain>ATCC 15305 / DSM 20229 / NCIMB 8711 / NCTC 7292 / S-41</strain>
    </source>
</reference>
<evidence type="ECO:0000255" key="1">
    <source>
        <dbReference type="HAMAP-Rule" id="MF_01813"/>
    </source>
</evidence>
<organism>
    <name type="scientific">Staphylococcus saprophyticus subsp. saprophyticus (strain ATCC 15305 / DSM 20229 / NCIMB 8711 / NCTC 7292 / S-41)</name>
    <dbReference type="NCBI Taxonomy" id="342451"/>
    <lineage>
        <taxon>Bacteria</taxon>
        <taxon>Bacillati</taxon>
        <taxon>Bacillota</taxon>
        <taxon>Bacilli</taxon>
        <taxon>Bacillales</taxon>
        <taxon>Staphylococcaceae</taxon>
        <taxon>Staphylococcus</taxon>
    </lineage>
</organism>
<accession>Q49XS5</accession>
<protein>
    <recommendedName>
        <fullName evidence="1">Demethylmenaquinone methyltransferase</fullName>
        <ecNumber evidence="1">2.1.1.163</ecNumber>
    </recommendedName>
</protein>